<sequence>MAALLRPARWLLGAAAAPRLPLSLRLPAGVPGRLSSVVRVAAVGSRPAAGERLSQARLYAIVAEKRDLQEEPAPVRKNSSQFDWALMRLDNSVRRTGRITKGLLQRVFESTCSSGSPGSNQALLLLRSCGSLLPELSLAERTEFAHKIWDKLQQLGVVYDVSHYNALLKVYLQNEYKFSPTDFLAKMEGANIQPNRVTYQRLIAAYCNVGDIEGASKILGFMKTKDLPITEAVFSALVTGHARAGDMENAENILTVMKQAGIEPGPDTYLALLNAHAERGDIGQVRQILEKVEKSDHYFMDRDFLQVIFSFSKAGYPQYVSEILEKITYERRSIPDAMNLILFLATEKLEDTAFQVLLALPLSKDESSDNFGSFFLRHCVTLDLPPEKLIDYCRRLRDAKLHSSSLQFTLHCALQANRTALAKAVMEALREEGFPIRPHYFWPLLAGHQKTKNVQGIIDILKIMNKVGVDPDQETYINYVFPCFDSAQSVRAALQENECLLASSTFAQAEVKNEAINGNLQNILSFLESNTLPFSFSSLRNSLILGFRRSMNIDLWSKITELLYKDERYCSKPPGPAEAVGYFLYNLIDSMSDSEVQAKEERLRQYFHQLQEMNVKVPENIYKGICNLLNTYHVPELIKDIKVLVDREKVDSQKTSQVTSSDLESTLEKLKAEGQPVGSALKQLLLLLCSEENMQKALEVKAKYESDMVIGGYAALINLCCRHDNAEDAWNLKQEVDRLDASAILDTAKYVALVKVLGKHSRLQDAINILKEMKEKDVVIKDATVLSFFHILNGAALRGEIETVKQLHEAIVTLGLAKPSSNISFPLVTVHLEKGDLPAALEASIACHKKYKVLPRIHDVLCKLVEKGETDLIQKAMDFVSQEQGEMTMLYDLFFAFLQTGNYKEAKKIIETPGIRARPTRLQWFCDRCIASNQVEALEKLVELTEKLFECDRDQMYYNLLKLYKISSDWQRADAAWTKMQEENIIPRERTLRLLAEILKTSNQEVPFDVPELWFGDDRPSLSPSSRSAGEDVTEKTLLSNCKLKKSKDAYNIFLKAEKQNVVFSSETYSTLIGLLLSKDDFTQAMHVKDFAETHIKGFTLNDAANSLLIIRQVRRDYLKGALATLRAALDLKQVPSQIAVTRLIQALALKGDVESIEAIQRMVAGLDTIGLSKMVFINNIALAQMKNNKLDAAIENIEHLLASENQAIEPQYFGLSYLFRKVIEEQMEPALEKLSIMSERMANQFALYKPVTDLFLQLVDSGKVDEARALLERCGAIAEQSSLLSVFCLRTSQKPKKAPVLKTLLELIPELRDNDKVYSCSMKSYALDKDVASAKALYEYLTAKNLKLDDLFLKRYAALLKDVGEPVPFPEPPESFAFYIKQLKEARESPS</sequence>
<comment type="function">
    <text evidence="2">May play a role in RNA metabolism in both nuclei and mitochondria. In the nucleus binds to HNRPA1-associated poly(A) mRNAs and is part of nmRNP complexes at late stages of mRNA maturation which are possibly associated with nuclear mRNA export. Positively modulates nuclear export of mRNAs containing the EIF4E sensitivity element (4ESE) by binding simultaneously to both EIF4E and the 4ESE and acting as a platform for assembly for the RNA export complex (By similarity). Also binds to exportin XPO1/CRM1 to engage the nuclear pore and traffic the bound mRNAs to the cytoplasm (By similarity). May bind mature mRNA in the nucleus outer membrane. In mitochondria binds to poly(A) mRNA. Plays a role in translation or stability of mitochondrially encoded cytochrome c oxidase (COX) subunits. May be involved in transcription regulation. Cooperates with PPARGC1A to regulate certain mitochondrially encoded genes and gluconeogenic genes and may regulate docking of PPARGC1A to transcription factors. Seems to be involved in the transcription regulation of the multidrug-related genes MDR1 and MVP. Part of a nuclear factor that binds to the invMED1 element of MDR1 and MVP gene promoters (By similarity). Binds single-stranded DNA. Required for maintaining mitochondrial potential (By similarity). Suppresses the initiation of basal levels of autophagy and mitophagy by sustaining BCL2 levels (By similarity).</text>
</comment>
<comment type="subunit">
    <text evidence="2 6 7 8">Component of mRNP complexes associated with HNRPA1 (By similarity). Component of the complex, at least composed of LRPPRC, BECN1 and BCL2; the interactions prevent BECN1 from forming an autophagy-inducing complex with PIK3C3 (By similarity). Interacts with CECR2, HEBP2, MAP1S and UXT (By similarity). Interacts with PPARGC1A (By similarity). Interacts with FOXO1 (PubMed:17050673). Interacts (via N-terminus) with EIF4E; the interaction promotes association of EIF4E with 4ESE-containing mRNAs (PubMed:19262567, PubMed:28325843). Interacts with exportin XPO1/CRM1; interacts both alone and in complex with EIF4E and 4ESE-containing mRNAs to form an EIF4E-dependent mRNA export complex (By similarity). Interacts with importin IPO8; the interaction occurs when LRPPRC is in its RNA-free form and returns LRPPRC to the nucleus for further export rounds (By similarity). Interacts with BECN1 (By similarity).</text>
</comment>
<comment type="interaction">
    <interactant intactId="EBI-1371262">
        <id>Q6PB66</id>
    </interactant>
    <interactant intactId="EBI-1371343">
        <id>Q9R1E0</id>
        <label>Foxo1</label>
    </interactant>
    <organismsDiffer>false</organismsDiffer>
    <experiments>2</experiments>
</comment>
<comment type="interaction">
    <interactant intactId="EBI-1371262">
        <id>Q6PB66</id>
    </interactant>
    <interactant intactId="EBI-1371053">
        <id>O70343</id>
        <label>Ppargc1a</label>
    </interactant>
    <organismsDiffer>false</organismsDiffer>
    <experiments>2</experiments>
</comment>
<comment type="subcellular location">
    <subcellularLocation>
        <location evidence="1">Mitochondrion</location>
    </subcellularLocation>
    <subcellularLocation>
        <location evidence="5">Nucleus</location>
    </subcellularLocation>
    <subcellularLocation>
        <location evidence="1">Nucleus</location>
        <location evidence="1">Nucleoplasm</location>
    </subcellularLocation>
    <subcellularLocation>
        <location evidence="1">Nucleus inner membrane</location>
    </subcellularLocation>
    <subcellularLocation>
        <location evidence="1">Nucleus outer membrane</location>
    </subcellularLocation>
</comment>
<comment type="tissue specificity">
    <text evidence="5">Strongly expressed in heart, liver and kidney. Weakly expressed in brain, skeletal muscle and testes.</text>
</comment>
<comment type="developmental stage">
    <text evidence="5">Expressed at embryonic stages 7 dpc, 11 dpc, 15 dpc and 17 dpc with a slight increase of levels during development.</text>
</comment>
<comment type="sequence caution" evidence="9">
    <conflict type="erroneous initiation">
        <sequence resource="EMBL-CDS" id="AAH59862"/>
    </conflict>
</comment>
<comment type="sequence caution" evidence="9">
    <conflict type="erroneous translation">
        <sequence resource="EMBL-CDS" id="BAB29082"/>
    </conflict>
    <text>CTG leucine codon is translated as initiator methionine.</text>
</comment>
<name>LPPRC_MOUSE</name>
<accession>Q6PB66</accession>
<accession>Q8K4V0</accession>
<accession>Q9CRX4</accession>
<organism>
    <name type="scientific">Mus musculus</name>
    <name type="common">Mouse</name>
    <dbReference type="NCBI Taxonomy" id="10090"/>
    <lineage>
        <taxon>Eukaryota</taxon>
        <taxon>Metazoa</taxon>
        <taxon>Chordata</taxon>
        <taxon>Craniata</taxon>
        <taxon>Vertebrata</taxon>
        <taxon>Euteleostomi</taxon>
        <taxon>Mammalia</taxon>
        <taxon>Eutheria</taxon>
        <taxon>Euarchontoglires</taxon>
        <taxon>Glires</taxon>
        <taxon>Rodentia</taxon>
        <taxon>Myomorpha</taxon>
        <taxon>Muroidea</taxon>
        <taxon>Muridae</taxon>
        <taxon>Murinae</taxon>
        <taxon>Mus</taxon>
        <taxon>Mus</taxon>
    </lineage>
</organism>
<evidence type="ECO:0000250" key="1"/>
<evidence type="ECO:0000250" key="2">
    <source>
        <dbReference type="UniProtKB" id="P42704"/>
    </source>
</evidence>
<evidence type="ECO:0000250" key="3">
    <source>
        <dbReference type="UniProtKB" id="Q5SGE0"/>
    </source>
</evidence>
<evidence type="ECO:0000255" key="4"/>
<evidence type="ECO:0000269" key="5">
    <source>
    </source>
</evidence>
<evidence type="ECO:0000269" key="6">
    <source>
    </source>
</evidence>
<evidence type="ECO:0000269" key="7">
    <source>
    </source>
</evidence>
<evidence type="ECO:0000269" key="8">
    <source>
    </source>
</evidence>
<evidence type="ECO:0000305" key="9"/>
<evidence type="ECO:0007744" key="10">
    <source>
    </source>
</evidence>
<keyword id="KW-0007">Acetylation</keyword>
<keyword id="KW-0072">Autophagy</keyword>
<keyword id="KW-0238">DNA-binding</keyword>
<keyword id="KW-0472">Membrane</keyword>
<keyword id="KW-0496">Mitochondrion</keyword>
<keyword id="KW-0509">mRNA transport</keyword>
<keyword id="KW-0539">Nucleus</keyword>
<keyword id="KW-0597">Phosphoprotein</keyword>
<keyword id="KW-1185">Reference proteome</keyword>
<keyword id="KW-0677">Repeat</keyword>
<keyword id="KW-0694">RNA-binding</keyword>
<keyword id="KW-0804">Transcription</keyword>
<keyword id="KW-0805">Transcription regulation</keyword>
<keyword id="KW-0809">Transit peptide</keyword>
<keyword id="KW-0813">Transport</keyword>
<protein>
    <recommendedName>
        <fullName>Leucine-rich PPR motif-containing protein, mitochondrial</fullName>
    </recommendedName>
    <alternativeName>
        <fullName>130 kDa leucine-rich protein</fullName>
        <shortName>LRP 130</shortName>
        <shortName>mLRP130</shortName>
    </alternativeName>
</protein>
<proteinExistence type="evidence at protein level"/>
<dbReference type="EMBL" id="AB027124">
    <property type="protein sequence ID" value="BAB93528.1"/>
    <property type="status" value="ALT_SEQ"/>
    <property type="molecule type" value="mRNA"/>
</dbReference>
<dbReference type="EMBL" id="BC059862">
    <property type="protein sequence ID" value="AAH59862.1"/>
    <property type="status" value="ALT_INIT"/>
    <property type="molecule type" value="mRNA"/>
</dbReference>
<dbReference type="EMBL" id="AK013955">
    <property type="protein sequence ID" value="BAB29082.2"/>
    <property type="status" value="ALT_SEQ"/>
    <property type="molecule type" value="mRNA"/>
</dbReference>
<dbReference type="CCDS" id="CCDS29003.2"/>
<dbReference type="RefSeq" id="NP_082509.2">
    <property type="nucleotide sequence ID" value="NM_028233.2"/>
</dbReference>
<dbReference type="SMR" id="Q6PB66"/>
<dbReference type="BioGRID" id="215365">
    <property type="interactions" value="24"/>
</dbReference>
<dbReference type="FunCoup" id="Q6PB66">
    <property type="interactions" value="3282"/>
</dbReference>
<dbReference type="IntAct" id="Q6PB66">
    <property type="interactions" value="10"/>
</dbReference>
<dbReference type="MINT" id="Q6PB66"/>
<dbReference type="STRING" id="10090.ENSMUSP00000107927"/>
<dbReference type="GlyGen" id="Q6PB66">
    <property type="glycosylation" value="2 sites, 1 N-linked glycan (1 site), 1 O-linked glycan (1 site)"/>
</dbReference>
<dbReference type="iPTMnet" id="Q6PB66"/>
<dbReference type="MetOSite" id="Q6PB66"/>
<dbReference type="PhosphoSitePlus" id="Q6PB66"/>
<dbReference type="SwissPalm" id="Q6PB66"/>
<dbReference type="jPOST" id="Q6PB66"/>
<dbReference type="PaxDb" id="10090-ENSMUSP00000107927"/>
<dbReference type="PeptideAtlas" id="Q6PB66"/>
<dbReference type="ProteomicsDB" id="252485"/>
<dbReference type="Pumba" id="Q6PB66"/>
<dbReference type="Antibodypedia" id="47400">
    <property type="antibodies" value="166 antibodies from 29 providers"/>
</dbReference>
<dbReference type="DNASU" id="72416"/>
<dbReference type="Ensembl" id="ENSMUST00000112308.9">
    <property type="protein sequence ID" value="ENSMUSP00000107927.3"/>
    <property type="gene ID" value="ENSMUSG00000024120.13"/>
</dbReference>
<dbReference type="GeneID" id="72416"/>
<dbReference type="KEGG" id="mmu:72416"/>
<dbReference type="UCSC" id="uc008dtc.1">
    <property type="organism name" value="mouse"/>
</dbReference>
<dbReference type="AGR" id="MGI:1919666"/>
<dbReference type="CTD" id="10128"/>
<dbReference type="MGI" id="MGI:1919666">
    <property type="gene designation" value="Lrpprc"/>
</dbReference>
<dbReference type="VEuPathDB" id="HostDB:ENSMUSG00000024120"/>
<dbReference type="eggNOG" id="KOG4318">
    <property type="taxonomic scope" value="Eukaryota"/>
</dbReference>
<dbReference type="GeneTree" id="ENSGT00960000186682"/>
<dbReference type="HOGENOM" id="CLU_006166_0_0_1"/>
<dbReference type="InParanoid" id="Q6PB66"/>
<dbReference type="OMA" id="HIDRNKI"/>
<dbReference type="OrthoDB" id="185373at2759"/>
<dbReference type="PhylomeDB" id="Q6PB66"/>
<dbReference type="TreeFam" id="TF323626"/>
<dbReference type="BioGRID-ORCS" id="72416">
    <property type="hits" value="12 hits in 75 CRISPR screens"/>
</dbReference>
<dbReference type="ChiTaRS" id="Lrpprc">
    <property type="organism name" value="mouse"/>
</dbReference>
<dbReference type="PRO" id="PR:Q6PB66"/>
<dbReference type="Proteomes" id="UP000000589">
    <property type="component" value="Chromosome 17"/>
</dbReference>
<dbReference type="RNAct" id="Q6PB66">
    <property type="molecule type" value="protein"/>
</dbReference>
<dbReference type="Bgee" id="ENSMUSG00000024120">
    <property type="expression patterns" value="Expressed in cardiac muscle of left ventricle and 264 other cell types or tissues"/>
</dbReference>
<dbReference type="ExpressionAtlas" id="Q6PB66">
    <property type="expression patterns" value="baseline and differential"/>
</dbReference>
<dbReference type="GO" id="GO:0000794">
    <property type="term" value="C:condensed nuclear chromosome"/>
    <property type="evidence" value="ECO:0000250"/>
    <property type="project" value="HGNC-UCL"/>
</dbReference>
<dbReference type="GO" id="GO:0005737">
    <property type="term" value="C:cytoplasm"/>
    <property type="evidence" value="ECO:0000314"/>
    <property type="project" value="MGI"/>
</dbReference>
<dbReference type="GO" id="GO:0005856">
    <property type="term" value="C:cytoskeleton"/>
    <property type="evidence" value="ECO:0000250"/>
    <property type="project" value="HGNC-UCL"/>
</dbReference>
<dbReference type="GO" id="GO:0005874">
    <property type="term" value="C:microtubule"/>
    <property type="evidence" value="ECO:0007669"/>
    <property type="project" value="Ensembl"/>
</dbReference>
<dbReference type="GO" id="GO:0042645">
    <property type="term" value="C:mitochondrial nucleoid"/>
    <property type="evidence" value="ECO:0007669"/>
    <property type="project" value="Ensembl"/>
</dbReference>
<dbReference type="GO" id="GO:0005739">
    <property type="term" value="C:mitochondrion"/>
    <property type="evidence" value="ECO:0000314"/>
    <property type="project" value="UniProtKB"/>
</dbReference>
<dbReference type="GO" id="GO:0005637">
    <property type="term" value="C:nuclear inner membrane"/>
    <property type="evidence" value="ECO:0007669"/>
    <property type="project" value="UniProtKB-SubCell"/>
</dbReference>
<dbReference type="GO" id="GO:0005640">
    <property type="term" value="C:nuclear outer membrane"/>
    <property type="evidence" value="ECO:0007669"/>
    <property type="project" value="UniProtKB-SubCell"/>
</dbReference>
<dbReference type="GO" id="GO:0005654">
    <property type="term" value="C:nucleoplasm"/>
    <property type="evidence" value="ECO:0007669"/>
    <property type="project" value="UniProtKB-SubCell"/>
</dbReference>
<dbReference type="GO" id="GO:0005634">
    <property type="term" value="C:nucleus"/>
    <property type="evidence" value="ECO:0000314"/>
    <property type="project" value="MGI"/>
</dbReference>
<dbReference type="GO" id="GO:0048471">
    <property type="term" value="C:perinuclear region of cytoplasm"/>
    <property type="evidence" value="ECO:0000250"/>
    <property type="project" value="HGNC-UCL"/>
</dbReference>
<dbReference type="GO" id="GO:1990904">
    <property type="term" value="C:ribonucleoprotein complex"/>
    <property type="evidence" value="ECO:0000314"/>
    <property type="project" value="MGI"/>
</dbReference>
<dbReference type="GO" id="GO:0048487">
    <property type="term" value="F:beta-tubulin binding"/>
    <property type="evidence" value="ECO:0000250"/>
    <property type="project" value="HGNC-UCL"/>
</dbReference>
<dbReference type="GO" id="GO:0003723">
    <property type="term" value="F:RNA binding"/>
    <property type="evidence" value="ECO:0000314"/>
    <property type="project" value="MGI"/>
</dbReference>
<dbReference type="GO" id="GO:0003697">
    <property type="term" value="F:single-stranded DNA binding"/>
    <property type="evidence" value="ECO:0000314"/>
    <property type="project" value="MGI"/>
</dbReference>
<dbReference type="GO" id="GO:0031625">
    <property type="term" value="F:ubiquitin protein ligase binding"/>
    <property type="evidence" value="ECO:0007669"/>
    <property type="project" value="Ensembl"/>
</dbReference>
<dbReference type="GO" id="GO:0006914">
    <property type="term" value="P:autophagy"/>
    <property type="evidence" value="ECO:0007669"/>
    <property type="project" value="UniProtKB-KW"/>
</dbReference>
<dbReference type="GO" id="GO:0000957">
    <property type="term" value="P:mitochondrial RNA catabolic process"/>
    <property type="evidence" value="ECO:0000315"/>
    <property type="project" value="MGI"/>
</dbReference>
<dbReference type="GO" id="GO:0051028">
    <property type="term" value="P:mRNA transport"/>
    <property type="evidence" value="ECO:0007669"/>
    <property type="project" value="UniProtKB-KW"/>
</dbReference>
<dbReference type="GO" id="GO:0000961">
    <property type="term" value="P:negative regulation of mitochondrial RNA catabolic process"/>
    <property type="evidence" value="ECO:0000315"/>
    <property type="project" value="MGI"/>
</dbReference>
<dbReference type="GO" id="GO:0070129">
    <property type="term" value="P:regulation of mitochondrial translation"/>
    <property type="evidence" value="ECO:0000315"/>
    <property type="project" value="MGI"/>
</dbReference>
<dbReference type="FunFam" id="1.25.40.10:FF:000428">
    <property type="entry name" value="Leucine-rich PPR motif-containing protein, mitochondrial"/>
    <property type="match status" value="1"/>
</dbReference>
<dbReference type="Gene3D" id="1.25.40.10">
    <property type="entry name" value="Tetratricopeptide repeat domain"/>
    <property type="match status" value="3"/>
</dbReference>
<dbReference type="InterPro" id="IPR033490">
    <property type="entry name" value="LRP130"/>
</dbReference>
<dbReference type="InterPro" id="IPR002885">
    <property type="entry name" value="Pentatricopeptide_rpt"/>
</dbReference>
<dbReference type="InterPro" id="IPR011990">
    <property type="entry name" value="TPR-like_helical_dom_sf"/>
</dbReference>
<dbReference type="PANTHER" id="PTHR46669">
    <property type="entry name" value="LEUCINE-RICH PPR MOTIF-CONTAINING PROTEIN, MITOCHONDRIAL"/>
    <property type="match status" value="1"/>
</dbReference>
<dbReference type="PANTHER" id="PTHR46669:SF1">
    <property type="entry name" value="LEUCINE-RICH PPR MOTIF-CONTAINING PROTEIN, MITOCHONDRIAL"/>
    <property type="match status" value="1"/>
</dbReference>
<dbReference type="Pfam" id="PF01535">
    <property type="entry name" value="PPR"/>
    <property type="match status" value="1"/>
</dbReference>
<dbReference type="Pfam" id="PF13812">
    <property type="entry name" value="PPR_3"/>
    <property type="match status" value="2"/>
</dbReference>
<dbReference type="PROSITE" id="PS51375">
    <property type="entry name" value="PPR"/>
    <property type="match status" value="13"/>
</dbReference>
<reference key="1">
    <citation type="journal article" date="2002" name="Eur. J. Biochem.">
        <title>LRP130, a protein containing nine pentatricopeptide repeat motifs, interacts with a single-stranded cytosine-rich sequence of mouse hypervariable minisatellite Pc-1.</title>
        <authorList>
            <person name="Tsuchiya N."/>
            <person name="Fukuda H."/>
            <person name="Sugimura T."/>
            <person name="Nagao M."/>
            <person name="Nakagama H."/>
        </authorList>
    </citation>
    <scope>NUCLEOTIDE SEQUENCE [MRNA]</scope>
    <scope>IDENTIFICATION BY MASS SPECTROMETRY</scope>
    <scope>DNA-BINDING</scope>
    <scope>SUBCELLULAR LOCATION</scope>
    <scope>TISSUE SPECIFICITY</scope>
    <scope>DEVELOPMENTAL STAGE</scope>
</reference>
<reference key="2">
    <citation type="journal article" date="2004" name="Genome Res.">
        <title>The status, quality, and expansion of the NIH full-length cDNA project: the Mammalian Gene Collection (MGC).</title>
        <authorList>
            <consortium name="The MGC Project Team"/>
        </authorList>
    </citation>
    <scope>NUCLEOTIDE SEQUENCE [LARGE SCALE MRNA]</scope>
    <source>
        <strain>C57BL/6J</strain>
        <tissue>Brain</tissue>
    </source>
</reference>
<reference key="3">
    <citation type="journal article" date="2005" name="Science">
        <title>The transcriptional landscape of the mammalian genome.</title>
        <authorList>
            <person name="Carninci P."/>
            <person name="Kasukawa T."/>
            <person name="Katayama S."/>
            <person name="Gough J."/>
            <person name="Frith M.C."/>
            <person name="Maeda N."/>
            <person name="Oyama R."/>
            <person name="Ravasi T."/>
            <person name="Lenhard B."/>
            <person name="Wells C."/>
            <person name="Kodzius R."/>
            <person name="Shimokawa K."/>
            <person name="Bajic V.B."/>
            <person name="Brenner S.E."/>
            <person name="Batalov S."/>
            <person name="Forrest A.R."/>
            <person name="Zavolan M."/>
            <person name="Davis M.J."/>
            <person name="Wilming L.G."/>
            <person name="Aidinis V."/>
            <person name="Allen J.E."/>
            <person name="Ambesi-Impiombato A."/>
            <person name="Apweiler R."/>
            <person name="Aturaliya R.N."/>
            <person name="Bailey T.L."/>
            <person name="Bansal M."/>
            <person name="Baxter L."/>
            <person name="Beisel K.W."/>
            <person name="Bersano T."/>
            <person name="Bono H."/>
            <person name="Chalk A.M."/>
            <person name="Chiu K.P."/>
            <person name="Choudhary V."/>
            <person name="Christoffels A."/>
            <person name="Clutterbuck D.R."/>
            <person name="Crowe M.L."/>
            <person name="Dalla E."/>
            <person name="Dalrymple B.P."/>
            <person name="de Bono B."/>
            <person name="Della Gatta G."/>
            <person name="di Bernardo D."/>
            <person name="Down T."/>
            <person name="Engstrom P."/>
            <person name="Fagiolini M."/>
            <person name="Faulkner G."/>
            <person name="Fletcher C.F."/>
            <person name="Fukushima T."/>
            <person name="Furuno M."/>
            <person name="Futaki S."/>
            <person name="Gariboldi M."/>
            <person name="Georgii-Hemming P."/>
            <person name="Gingeras T.R."/>
            <person name="Gojobori T."/>
            <person name="Green R.E."/>
            <person name="Gustincich S."/>
            <person name="Harbers M."/>
            <person name="Hayashi Y."/>
            <person name="Hensch T.K."/>
            <person name="Hirokawa N."/>
            <person name="Hill D."/>
            <person name="Huminiecki L."/>
            <person name="Iacono M."/>
            <person name="Ikeo K."/>
            <person name="Iwama A."/>
            <person name="Ishikawa T."/>
            <person name="Jakt M."/>
            <person name="Kanapin A."/>
            <person name="Katoh M."/>
            <person name="Kawasawa Y."/>
            <person name="Kelso J."/>
            <person name="Kitamura H."/>
            <person name="Kitano H."/>
            <person name="Kollias G."/>
            <person name="Krishnan S.P."/>
            <person name="Kruger A."/>
            <person name="Kummerfeld S.K."/>
            <person name="Kurochkin I.V."/>
            <person name="Lareau L.F."/>
            <person name="Lazarevic D."/>
            <person name="Lipovich L."/>
            <person name="Liu J."/>
            <person name="Liuni S."/>
            <person name="McWilliam S."/>
            <person name="Madan Babu M."/>
            <person name="Madera M."/>
            <person name="Marchionni L."/>
            <person name="Matsuda H."/>
            <person name="Matsuzawa S."/>
            <person name="Miki H."/>
            <person name="Mignone F."/>
            <person name="Miyake S."/>
            <person name="Morris K."/>
            <person name="Mottagui-Tabar S."/>
            <person name="Mulder N."/>
            <person name="Nakano N."/>
            <person name="Nakauchi H."/>
            <person name="Ng P."/>
            <person name="Nilsson R."/>
            <person name="Nishiguchi S."/>
            <person name="Nishikawa S."/>
            <person name="Nori F."/>
            <person name="Ohara O."/>
            <person name="Okazaki Y."/>
            <person name="Orlando V."/>
            <person name="Pang K.C."/>
            <person name="Pavan W.J."/>
            <person name="Pavesi G."/>
            <person name="Pesole G."/>
            <person name="Petrovsky N."/>
            <person name="Piazza S."/>
            <person name="Reed J."/>
            <person name="Reid J.F."/>
            <person name="Ring B.Z."/>
            <person name="Ringwald M."/>
            <person name="Rost B."/>
            <person name="Ruan Y."/>
            <person name="Salzberg S.L."/>
            <person name="Sandelin A."/>
            <person name="Schneider C."/>
            <person name="Schoenbach C."/>
            <person name="Sekiguchi K."/>
            <person name="Semple C.A."/>
            <person name="Seno S."/>
            <person name="Sessa L."/>
            <person name="Sheng Y."/>
            <person name="Shibata Y."/>
            <person name="Shimada H."/>
            <person name="Shimada K."/>
            <person name="Silva D."/>
            <person name="Sinclair B."/>
            <person name="Sperling S."/>
            <person name="Stupka E."/>
            <person name="Sugiura K."/>
            <person name="Sultana R."/>
            <person name="Takenaka Y."/>
            <person name="Taki K."/>
            <person name="Tammoja K."/>
            <person name="Tan S.L."/>
            <person name="Tang S."/>
            <person name="Taylor M.S."/>
            <person name="Tegner J."/>
            <person name="Teichmann S.A."/>
            <person name="Ueda H.R."/>
            <person name="van Nimwegen E."/>
            <person name="Verardo R."/>
            <person name="Wei C.L."/>
            <person name="Yagi K."/>
            <person name="Yamanishi H."/>
            <person name="Zabarovsky E."/>
            <person name="Zhu S."/>
            <person name="Zimmer A."/>
            <person name="Hide W."/>
            <person name="Bult C."/>
            <person name="Grimmond S.M."/>
            <person name="Teasdale R.D."/>
            <person name="Liu E.T."/>
            <person name="Brusic V."/>
            <person name="Quackenbush J."/>
            <person name="Wahlestedt C."/>
            <person name="Mattick J.S."/>
            <person name="Hume D.A."/>
            <person name="Kai C."/>
            <person name="Sasaki D."/>
            <person name="Tomaru Y."/>
            <person name="Fukuda S."/>
            <person name="Kanamori-Katayama M."/>
            <person name="Suzuki M."/>
            <person name="Aoki J."/>
            <person name="Arakawa T."/>
            <person name="Iida J."/>
            <person name="Imamura K."/>
            <person name="Itoh M."/>
            <person name="Kato T."/>
            <person name="Kawaji H."/>
            <person name="Kawagashira N."/>
            <person name="Kawashima T."/>
            <person name="Kojima M."/>
            <person name="Kondo S."/>
            <person name="Konno H."/>
            <person name="Nakano K."/>
            <person name="Ninomiya N."/>
            <person name="Nishio T."/>
            <person name="Okada M."/>
            <person name="Plessy C."/>
            <person name="Shibata K."/>
            <person name="Shiraki T."/>
            <person name="Suzuki S."/>
            <person name="Tagami M."/>
            <person name="Waki K."/>
            <person name="Watahiki A."/>
            <person name="Okamura-Oho Y."/>
            <person name="Suzuki H."/>
            <person name="Kawai J."/>
            <person name="Hayashizaki Y."/>
        </authorList>
    </citation>
    <scope>NUCLEOTIDE SEQUENCE [LARGE SCALE MRNA] OF 681-1392</scope>
    <source>
        <strain>C57BL/6J</strain>
        <tissue>Head</tissue>
    </source>
</reference>
<reference key="4">
    <citation type="journal article" date="2004" name="Biochem. Biophys. Res. Commun.">
        <title>LRP130, a single-stranded DNA/RNA-binding protein, localizes at the outer nuclear and endoplasmic reticulum membrane, and interacts with mRNA in vivo.</title>
        <authorList>
            <person name="Tsuchiya N."/>
            <person name="Fukuda H."/>
            <person name="Nakashima K."/>
            <person name="Nagao M."/>
            <person name="Sugimura T."/>
            <person name="Nakagama H."/>
        </authorList>
    </citation>
    <scope>RNA-BINDING</scope>
</reference>
<reference key="5">
    <citation type="journal article" date="2006" name="Genes Dev.">
        <title>Defects in energy homeostasis in Leigh syndrome French Canadian variant through PGC-1alpha/LRP130 complex.</title>
        <authorList>
            <person name="Cooper M.P."/>
            <person name="Qu L."/>
            <person name="Rohas L.M."/>
            <person name="Lin J."/>
            <person name="Yang W."/>
            <person name="Erdjument-Bromage H."/>
            <person name="Tempst P."/>
            <person name="Spiegelman B.M."/>
        </authorList>
    </citation>
    <scope>INTERACTION WITH FOXO1</scope>
</reference>
<reference key="6">
    <citation type="journal article" date="2010" name="Cell">
        <title>A tissue-specific atlas of mouse protein phosphorylation and expression.</title>
        <authorList>
            <person name="Huttlin E.L."/>
            <person name="Jedrychowski M.P."/>
            <person name="Elias J.E."/>
            <person name="Goswami T."/>
            <person name="Rad R."/>
            <person name="Beausoleil S.A."/>
            <person name="Villen J."/>
            <person name="Haas W."/>
            <person name="Sowa M.E."/>
            <person name="Gygi S.P."/>
        </authorList>
    </citation>
    <scope>IDENTIFICATION BY MASS SPECTROMETRY [LARGE SCALE ANALYSIS]</scope>
    <source>
        <tissue>Brain</tissue>
        <tissue>Brown adipose tissue</tissue>
        <tissue>Heart</tissue>
        <tissue>Kidney</tissue>
        <tissue>Liver</tissue>
        <tissue>Lung</tissue>
        <tissue>Pancreas</tissue>
        <tissue>Spleen</tissue>
        <tissue>Testis</tissue>
    </source>
</reference>
<reference key="7">
    <citation type="journal article" date="2013" name="Proc. Natl. Acad. Sci. U.S.A.">
        <title>Label-free quantitative proteomics of the lysine acetylome in mitochondria identifies substrates of SIRT3 in metabolic pathways.</title>
        <authorList>
            <person name="Rardin M.J."/>
            <person name="Newman J.C."/>
            <person name="Held J.M."/>
            <person name="Cusack M.P."/>
            <person name="Sorensen D.J."/>
            <person name="Li B."/>
            <person name="Schilling B."/>
            <person name="Mooney S.D."/>
            <person name="Kahn C.R."/>
            <person name="Verdin E."/>
            <person name="Gibson B.W."/>
        </authorList>
    </citation>
    <scope>ACETYLATION [LARGE SCALE ANALYSIS] AT LYS-151; LYS-186; LYS-225 AND LYS-462</scope>
    <scope>IDENTIFICATION BY MASS SPECTROMETRY [LARGE SCALE ANALYSIS]</scope>
    <source>
        <tissue>Liver</tissue>
    </source>
</reference>
<reference key="8">
    <citation type="journal article" date="2009" name="EMBO J.">
        <title>Molecular dissection of the eukaryotic initiation factor 4E (eIF4E) export-competent RNP.</title>
        <authorList>
            <person name="Topisirovic I."/>
            <person name="Siddiqui N."/>
            <person name="Lapointe V.L."/>
            <person name="Trost M."/>
            <person name="Thibault P."/>
            <person name="Bangeranye C."/>
            <person name="Pinol-Roma S."/>
            <person name="Borden K.L."/>
        </authorList>
    </citation>
    <scope>INTERACTION WITH EIF4E</scope>
</reference>
<reference key="9">
    <citation type="journal article" date="2017" name="RNA">
        <title>A biochemical framework for eIF4E-dependent mRNA export and nuclear recycling of the export machinery.</title>
        <authorList>
            <person name="Volpon L."/>
            <person name="Culjkovic-Kraljacic B."/>
            <person name="Sohn H.S."/>
            <person name="Blanchet-Cohen A."/>
            <person name="Osborne M.J."/>
            <person name="Borden K.L.B."/>
        </authorList>
    </citation>
    <scope>INTERACTION WITH EIF4E</scope>
</reference>
<gene>
    <name type="primary">Lrpprc</name>
    <name type="synonym">Lrp130</name>
</gene>
<feature type="transit peptide" description="Mitochondrion" evidence="4">
    <location>
        <begin position="1"/>
        <end position="59"/>
    </location>
</feature>
<feature type="chain" id="PRO_0000295546" description="Leucine-rich PPR motif-containing protein, mitochondrial">
    <location>
        <begin position="60"/>
        <end position="1392"/>
    </location>
</feature>
<feature type="repeat" description="PPR 1">
    <location>
        <begin position="125"/>
        <end position="159"/>
    </location>
</feature>
<feature type="repeat" description="PPR 2">
    <location>
        <begin position="160"/>
        <end position="194"/>
    </location>
</feature>
<feature type="repeat" description="PPR 3">
    <location>
        <begin position="195"/>
        <end position="229"/>
    </location>
</feature>
<feature type="repeat" description="PPR 4">
    <location>
        <begin position="230"/>
        <end position="264"/>
    </location>
</feature>
<feature type="repeat" description="PPR 5">
    <location>
        <begin position="265"/>
        <end position="299"/>
    </location>
</feature>
<feature type="repeat" description="PPR 6">
    <location>
        <begin position="300"/>
        <end position="334"/>
    </location>
</feature>
<feature type="repeat" description="PPR 7">
    <location>
        <begin position="402"/>
        <end position="436"/>
    </location>
</feature>
<feature type="repeat" description="PPR 8">
    <location>
        <begin position="437"/>
        <end position="471"/>
    </location>
</feature>
<feature type="repeat" description="PPR 9">
    <location>
        <begin position="677"/>
        <end position="708"/>
    </location>
</feature>
<feature type="repeat" description="PPR 10">
    <location>
        <begin position="709"/>
        <end position="745"/>
    </location>
</feature>
<feature type="repeat" description="PPR 11">
    <location>
        <begin position="746"/>
        <end position="783"/>
    </location>
</feature>
<feature type="repeat" description="PPR 12">
    <location>
        <begin position="784"/>
        <end position="820"/>
    </location>
</feature>
<feature type="repeat" description="PPR 13">
    <location>
        <begin position="821"/>
        <end position="856"/>
    </location>
</feature>
<feature type="repeat" description="PPR 14">
    <location>
        <begin position="953"/>
        <end position="987"/>
    </location>
</feature>
<feature type="repeat" description="PPR 15">
    <location>
        <begin position="1030"/>
        <end position="1064"/>
    </location>
</feature>
<feature type="repeat" description="PPR 16">
    <location>
        <begin position="1065"/>
        <end position="1101"/>
    </location>
</feature>
<feature type="repeat" description="PPR 17">
    <location>
        <begin position="1102"/>
        <end position="1136"/>
    </location>
</feature>
<feature type="repeat" description="PPR 18">
    <location>
        <begin position="1137"/>
        <end position="1175"/>
    </location>
</feature>
<feature type="repeat" description="PPR 19">
    <location>
        <begin position="1176"/>
        <end position="1210"/>
    </location>
</feature>
<feature type="repeat" description="PPR 20">
    <location>
        <begin position="1315"/>
        <end position="1349"/>
    </location>
</feature>
<feature type="region of interest" description="RNA-binding">
    <location>
        <begin position="931"/>
        <end position="1050"/>
    </location>
</feature>
<feature type="modified residue" description="N6-acetyllysine" evidence="10">
    <location>
        <position position="151"/>
    </location>
</feature>
<feature type="modified residue" description="N6-acetyllysine" evidence="10">
    <location>
        <position position="186"/>
    </location>
</feature>
<feature type="modified residue" description="N6-acetyllysine" evidence="10">
    <location>
        <position position="225"/>
    </location>
</feature>
<feature type="modified residue" description="N6-acetyllysine" evidence="2">
    <location>
        <position position="291"/>
    </location>
</feature>
<feature type="modified residue" description="N6-acetyllysine" evidence="10">
    <location>
        <position position="462"/>
    </location>
</feature>
<feature type="modified residue" description="N6-acetyllysine" evidence="2">
    <location>
        <position position="749"/>
    </location>
</feature>
<feature type="modified residue" description="Phosphoserine" evidence="2">
    <location>
        <position position="1025"/>
    </location>
</feature>
<feature type="modified residue" description="Phosphoserine" evidence="3">
    <location>
        <position position="1026"/>
    </location>
</feature>
<feature type="modified residue" description="Phosphoserine" evidence="2">
    <location>
        <position position="1028"/>
    </location>
</feature>
<feature type="modified residue" description="Phosphoserine" evidence="2">
    <location>
        <position position="1137"/>
    </location>
</feature>
<feature type="sequence conflict" description="In Ref. 1; BAB93528." evidence="9" ref="1">
    <original>S</original>
    <variation>F</variation>
    <location>
        <position position="35"/>
    </location>
</feature>
<feature type="sequence conflict" description="In Ref. 1; BAB93528." evidence="9" ref="1">
    <original>R</original>
    <variation>L</variation>
    <location>
        <position position="52"/>
    </location>
</feature>
<feature type="sequence conflict" description="In Ref. 1; BAB93528." evidence="9" ref="1">
    <original>D</original>
    <variation>V</variation>
    <location>
        <position position="67"/>
    </location>
</feature>
<feature type="sequence conflict" description="In Ref. 1; BAB93528." evidence="9" ref="1">
    <original>K</original>
    <variation>E</variation>
    <location>
        <position position="466"/>
    </location>
</feature>